<feature type="chain" id="PRO_0000108828" description="Phospho-N-acetylmuramoyl-pentapeptide-transferase">
    <location>
        <begin position="1"/>
        <end position="324"/>
    </location>
</feature>
<feature type="transmembrane region" description="Helical" evidence="1">
    <location>
        <begin position="5"/>
        <end position="25"/>
    </location>
</feature>
<feature type="transmembrane region" description="Helical" evidence="1">
    <location>
        <begin position="57"/>
        <end position="77"/>
    </location>
</feature>
<feature type="transmembrane region" description="Helical" evidence="1">
    <location>
        <begin position="81"/>
        <end position="101"/>
    </location>
</feature>
<feature type="transmembrane region" description="Helical" evidence="1">
    <location>
        <begin position="117"/>
        <end position="137"/>
    </location>
</feature>
<feature type="transmembrane region" description="Helical" evidence="1">
    <location>
        <begin position="147"/>
        <end position="167"/>
    </location>
</feature>
<feature type="transmembrane region" description="Helical" evidence="1">
    <location>
        <begin position="176"/>
        <end position="196"/>
    </location>
</feature>
<feature type="transmembrane region" description="Helical" evidence="1">
    <location>
        <begin position="203"/>
        <end position="223"/>
    </location>
</feature>
<feature type="transmembrane region" description="Helical" evidence="1">
    <location>
        <begin position="227"/>
        <end position="247"/>
    </location>
</feature>
<feature type="transmembrane region" description="Helical" evidence="1">
    <location>
        <begin position="250"/>
        <end position="270"/>
    </location>
</feature>
<feature type="transmembrane region" description="Helical" evidence="1">
    <location>
        <begin position="302"/>
        <end position="322"/>
    </location>
</feature>
<proteinExistence type="inferred from homology"/>
<comment type="function">
    <text evidence="1">Catalyzes the initial step of the lipid cycle reactions in the biosynthesis of the cell wall peptidoglycan: transfers peptidoglycan precursor phospho-MurNAc-pentapeptide from UDP-MurNAc-pentapeptide onto the lipid carrier undecaprenyl phosphate, yielding undecaprenyl-pyrophosphoryl-MurNAc-pentapeptide, known as lipid I.</text>
</comment>
<comment type="catalytic activity">
    <reaction evidence="1">
        <text>UDP-N-acetyl-alpha-D-muramoyl-L-alanyl-gamma-D-glutamyl-meso-2,6-diaminopimeloyl-D-alanyl-D-alanine + di-trans,octa-cis-undecaprenyl phosphate = di-trans,octa-cis-undecaprenyl diphospho-N-acetyl-alpha-D-muramoyl-L-alanyl-D-glutamyl-meso-2,6-diaminopimeloyl-D-alanyl-D-alanine + UMP</text>
        <dbReference type="Rhea" id="RHEA:28386"/>
        <dbReference type="ChEBI" id="CHEBI:57865"/>
        <dbReference type="ChEBI" id="CHEBI:60392"/>
        <dbReference type="ChEBI" id="CHEBI:61386"/>
        <dbReference type="ChEBI" id="CHEBI:61387"/>
        <dbReference type="EC" id="2.7.8.13"/>
    </reaction>
</comment>
<comment type="cofactor">
    <cofactor evidence="1">
        <name>Mg(2+)</name>
        <dbReference type="ChEBI" id="CHEBI:18420"/>
    </cofactor>
</comment>
<comment type="pathway">
    <text evidence="1">Cell wall biogenesis; peptidoglycan biosynthesis.</text>
</comment>
<comment type="subcellular location">
    <subcellularLocation>
        <location evidence="1">Cell membrane</location>
        <topology evidence="1">Multi-pass membrane protein</topology>
    </subcellularLocation>
</comment>
<comment type="similarity">
    <text evidence="1">Belongs to the glycosyltransferase 4 family. MraY subfamily.</text>
</comment>
<gene>
    <name evidence="1" type="primary">mraY</name>
    <name type="ordered locus">GK1117</name>
</gene>
<organism>
    <name type="scientific">Geobacillus kaustophilus (strain HTA426)</name>
    <dbReference type="NCBI Taxonomy" id="235909"/>
    <lineage>
        <taxon>Bacteria</taxon>
        <taxon>Bacillati</taxon>
        <taxon>Bacillota</taxon>
        <taxon>Bacilli</taxon>
        <taxon>Bacillales</taxon>
        <taxon>Anoxybacillaceae</taxon>
        <taxon>Geobacillus</taxon>
        <taxon>Geobacillus thermoleovorans group</taxon>
    </lineage>
</organism>
<keyword id="KW-0131">Cell cycle</keyword>
<keyword id="KW-0132">Cell division</keyword>
<keyword id="KW-1003">Cell membrane</keyword>
<keyword id="KW-0133">Cell shape</keyword>
<keyword id="KW-0961">Cell wall biogenesis/degradation</keyword>
<keyword id="KW-0460">Magnesium</keyword>
<keyword id="KW-0472">Membrane</keyword>
<keyword id="KW-0479">Metal-binding</keyword>
<keyword id="KW-0573">Peptidoglycan synthesis</keyword>
<keyword id="KW-1185">Reference proteome</keyword>
<keyword id="KW-0808">Transferase</keyword>
<keyword id="KW-0812">Transmembrane</keyword>
<keyword id="KW-1133">Transmembrane helix</keyword>
<sequence>MPEQAIVIAMAVSFLITVVLSPLFIPFLRRLKFGQSIREEGPKSHQKKSGTPTMGGIMILLAIVATTLWITPKIAGLSTRTYLLLLVTVGYGVLGFLDDMIKVVMKRNLGLTSRQKFIGQLLIAAIFFAVYRQSGFSTVLHIPGADWSVDLGWAYGVLLLFMLVGGSNAVNLTDGLDGLLAGTAAIAFGAYAVLAWNQGQYDVAVFCVAVVGAVLGFLVFNAHPAKVFMGDTGSLALGGAIAAVAVLTKLELLLVIIGGVFVIETLSVIIQVASFKTTGRRVFRMSPLHHHYELVGWSEWRIVVTFWAVGLLFAMLGIYIEVWM</sequence>
<reference key="1">
    <citation type="journal article" date="2004" name="Nucleic Acids Res.">
        <title>Thermoadaptation trait revealed by the genome sequence of thermophilic Geobacillus kaustophilus.</title>
        <authorList>
            <person name="Takami H."/>
            <person name="Takaki Y."/>
            <person name="Chee G.-J."/>
            <person name="Nishi S."/>
            <person name="Shimamura S."/>
            <person name="Suzuki H."/>
            <person name="Matsui S."/>
            <person name="Uchiyama I."/>
        </authorList>
    </citation>
    <scope>NUCLEOTIDE SEQUENCE [LARGE SCALE GENOMIC DNA]</scope>
    <source>
        <strain>HTA426</strain>
    </source>
</reference>
<protein>
    <recommendedName>
        <fullName evidence="1">Phospho-N-acetylmuramoyl-pentapeptide-transferase</fullName>
        <ecNumber evidence="1">2.7.8.13</ecNumber>
    </recommendedName>
    <alternativeName>
        <fullName evidence="1">UDP-MurNAc-pentapeptide phosphotransferase</fullName>
    </alternativeName>
</protein>
<evidence type="ECO:0000255" key="1">
    <source>
        <dbReference type="HAMAP-Rule" id="MF_00038"/>
    </source>
</evidence>
<dbReference type="EC" id="2.7.8.13" evidence="1"/>
<dbReference type="EMBL" id="BA000043">
    <property type="protein sequence ID" value="BAD75402.1"/>
    <property type="molecule type" value="Genomic_DNA"/>
</dbReference>
<dbReference type="RefSeq" id="WP_011230617.1">
    <property type="nucleotide sequence ID" value="NC_006510.1"/>
</dbReference>
<dbReference type="SMR" id="Q5L0X8"/>
<dbReference type="STRING" id="235909.GK1117"/>
<dbReference type="GeneID" id="32063021"/>
<dbReference type="KEGG" id="gka:GK1117"/>
<dbReference type="eggNOG" id="COG0472">
    <property type="taxonomic scope" value="Bacteria"/>
</dbReference>
<dbReference type="HOGENOM" id="CLU_023982_0_1_9"/>
<dbReference type="UniPathway" id="UPA00219"/>
<dbReference type="Proteomes" id="UP000001172">
    <property type="component" value="Chromosome"/>
</dbReference>
<dbReference type="GO" id="GO:0005886">
    <property type="term" value="C:plasma membrane"/>
    <property type="evidence" value="ECO:0007669"/>
    <property type="project" value="UniProtKB-SubCell"/>
</dbReference>
<dbReference type="GO" id="GO:0046872">
    <property type="term" value="F:metal ion binding"/>
    <property type="evidence" value="ECO:0007669"/>
    <property type="project" value="UniProtKB-KW"/>
</dbReference>
<dbReference type="GO" id="GO:0008963">
    <property type="term" value="F:phospho-N-acetylmuramoyl-pentapeptide-transferase activity"/>
    <property type="evidence" value="ECO:0007669"/>
    <property type="project" value="UniProtKB-UniRule"/>
</dbReference>
<dbReference type="GO" id="GO:0051992">
    <property type="term" value="F:UDP-N-acetylmuramoyl-L-alanyl-D-glutamyl-meso-2,6-diaminopimelyl-D-alanyl-D-alanine:undecaprenyl-phosphate transferase activity"/>
    <property type="evidence" value="ECO:0007669"/>
    <property type="project" value="RHEA"/>
</dbReference>
<dbReference type="GO" id="GO:0051301">
    <property type="term" value="P:cell division"/>
    <property type="evidence" value="ECO:0007669"/>
    <property type="project" value="UniProtKB-KW"/>
</dbReference>
<dbReference type="GO" id="GO:0071555">
    <property type="term" value="P:cell wall organization"/>
    <property type="evidence" value="ECO:0007669"/>
    <property type="project" value="UniProtKB-KW"/>
</dbReference>
<dbReference type="GO" id="GO:0009252">
    <property type="term" value="P:peptidoglycan biosynthetic process"/>
    <property type="evidence" value="ECO:0007669"/>
    <property type="project" value="UniProtKB-UniRule"/>
</dbReference>
<dbReference type="GO" id="GO:0008360">
    <property type="term" value="P:regulation of cell shape"/>
    <property type="evidence" value="ECO:0007669"/>
    <property type="project" value="UniProtKB-KW"/>
</dbReference>
<dbReference type="CDD" id="cd06852">
    <property type="entry name" value="GT_MraY"/>
    <property type="match status" value="1"/>
</dbReference>
<dbReference type="HAMAP" id="MF_00038">
    <property type="entry name" value="MraY"/>
    <property type="match status" value="1"/>
</dbReference>
<dbReference type="InterPro" id="IPR000715">
    <property type="entry name" value="Glycosyl_transferase_4"/>
</dbReference>
<dbReference type="InterPro" id="IPR003524">
    <property type="entry name" value="PNAcMuramoyl-5peptid_Trfase"/>
</dbReference>
<dbReference type="InterPro" id="IPR018480">
    <property type="entry name" value="PNAcMuramoyl-5peptid_Trfase_CS"/>
</dbReference>
<dbReference type="NCBIfam" id="TIGR00445">
    <property type="entry name" value="mraY"/>
    <property type="match status" value="1"/>
</dbReference>
<dbReference type="PANTHER" id="PTHR22926">
    <property type="entry name" value="PHOSPHO-N-ACETYLMURAMOYL-PENTAPEPTIDE-TRANSFERASE"/>
    <property type="match status" value="1"/>
</dbReference>
<dbReference type="PANTHER" id="PTHR22926:SF5">
    <property type="entry name" value="PHOSPHO-N-ACETYLMURAMOYL-PENTAPEPTIDE-TRANSFERASE HOMOLOG"/>
    <property type="match status" value="1"/>
</dbReference>
<dbReference type="Pfam" id="PF00953">
    <property type="entry name" value="Glycos_transf_4"/>
    <property type="match status" value="1"/>
</dbReference>
<dbReference type="Pfam" id="PF10555">
    <property type="entry name" value="MraY_sig1"/>
    <property type="match status" value="1"/>
</dbReference>
<dbReference type="PROSITE" id="PS01347">
    <property type="entry name" value="MRAY_1"/>
    <property type="match status" value="1"/>
</dbReference>
<dbReference type="PROSITE" id="PS01348">
    <property type="entry name" value="MRAY_2"/>
    <property type="match status" value="1"/>
</dbReference>
<accession>Q5L0X8</accession>
<name>MRAY_GEOKA</name>